<keyword id="KW-0002">3D-structure</keyword>
<keyword id="KW-0007">Acetylation</keyword>
<keyword id="KW-0025">Alternative splicing</keyword>
<keyword id="KW-0106">Calcium</keyword>
<keyword id="KW-0479">Metal-binding</keyword>
<keyword id="KW-1267">Proteomics identification</keyword>
<keyword id="KW-1185">Reference proteome</keyword>
<keyword id="KW-0677">Repeat</keyword>
<keyword id="KW-0848">Vitamin D</keyword>
<proteinExistence type="evidence at protein level"/>
<sequence>MAESHLQSSLITASQFFEIWLHFDADGSGYLEGKELQNLIQELQQARKKAGLELSPEMKTFVDQYGQRDDGKIGIVELAHVLPTEENFLLLFRCQQLKSCEEFMKTWRKYDTDHSGFIETEELKNFLKDLLEKANKTVDDTKLAEYTDLMLKLFDSNNDGKLELTEMARLLPVQENFLLKFQGIKMCGKEFNKAFELYDQDGNGYIDENELDALLKDLCEKNKQDLDINNITTYKKNIMALSDGGKLYRTDLALILCAGDN</sequence>
<feature type="initiator methionine" description="Removed" evidence="1">
    <location>
        <position position="1"/>
    </location>
</feature>
<feature type="chain" id="PRO_0000073472" description="Calbindin">
    <location>
        <begin position="2"/>
        <end position="261"/>
    </location>
</feature>
<feature type="domain" description="EF-hand 1" evidence="2">
    <location>
        <begin position="11"/>
        <end position="46"/>
    </location>
</feature>
<feature type="domain" description="EF-hand 2" evidence="2">
    <location>
        <begin position="53"/>
        <end position="88"/>
    </location>
</feature>
<feature type="domain" description="EF-hand 3" evidence="2">
    <location>
        <begin position="98"/>
        <end position="133"/>
    </location>
</feature>
<feature type="domain" description="EF-hand 4" evidence="2">
    <location>
        <begin position="142"/>
        <end position="177"/>
    </location>
</feature>
<feature type="domain" description="EF-hand 5" evidence="2">
    <location>
        <begin position="186"/>
        <end position="221"/>
    </location>
</feature>
<feature type="region of interest" description="Interaction with RANBP9" evidence="3">
    <location>
        <begin position="2"/>
        <end position="7"/>
    </location>
</feature>
<feature type="binding site" evidence="2 4 7">
    <location>
        <position position="24"/>
    </location>
    <ligand>
        <name>Ca(2+)</name>
        <dbReference type="ChEBI" id="CHEBI:29108"/>
        <label>1</label>
    </ligand>
</feature>
<feature type="binding site" evidence="2 4 7">
    <location>
        <position position="26"/>
    </location>
    <ligand>
        <name>Ca(2+)</name>
        <dbReference type="ChEBI" id="CHEBI:29108"/>
        <label>1</label>
    </ligand>
</feature>
<feature type="binding site" evidence="2 4 7">
    <location>
        <position position="28"/>
    </location>
    <ligand>
        <name>Ca(2+)</name>
        <dbReference type="ChEBI" id="CHEBI:29108"/>
        <label>1</label>
    </ligand>
</feature>
<feature type="binding site" evidence="2 4 7">
    <location>
        <position position="30"/>
    </location>
    <ligand>
        <name>Ca(2+)</name>
        <dbReference type="ChEBI" id="CHEBI:29108"/>
        <label>1</label>
    </ligand>
</feature>
<feature type="binding site" evidence="2 4 7">
    <location>
        <position position="35"/>
    </location>
    <ligand>
        <name>Ca(2+)</name>
        <dbReference type="ChEBI" id="CHEBI:29108"/>
        <label>1</label>
    </ligand>
</feature>
<feature type="binding site" evidence="2 4 7">
    <location>
        <position position="111"/>
    </location>
    <ligand>
        <name>Ca(2+)</name>
        <dbReference type="ChEBI" id="CHEBI:29108"/>
        <label>2</label>
    </ligand>
</feature>
<feature type="binding site" evidence="2 4 7">
    <location>
        <position position="113"/>
    </location>
    <ligand>
        <name>Ca(2+)</name>
        <dbReference type="ChEBI" id="CHEBI:29108"/>
        <label>2</label>
    </ligand>
</feature>
<feature type="binding site" evidence="2 4 7">
    <location>
        <position position="115"/>
    </location>
    <ligand>
        <name>Ca(2+)</name>
        <dbReference type="ChEBI" id="CHEBI:29108"/>
        <label>2</label>
    </ligand>
</feature>
<feature type="binding site" evidence="2 4 7">
    <location>
        <position position="122"/>
    </location>
    <ligand>
        <name>Ca(2+)</name>
        <dbReference type="ChEBI" id="CHEBI:29108"/>
        <label>2</label>
    </ligand>
</feature>
<feature type="binding site" evidence="2 4 7">
    <location>
        <position position="155"/>
    </location>
    <ligand>
        <name>Ca(2+)</name>
        <dbReference type="ChEBI" id="CHEBI:29108"/>
        <label>3</label>
    </ligand>
</feature>
<feature type="binding site" evidence="2 4 7">
    <location>
        <position position="157"/>
    </location>
    <ligand>
        <name>Ca(2+)</name>
        <dbReference type="ChEBI" id="CHEBI:29108"/>
        <label>3</label>
    </ligand>
</feature>
<feature type="binding site" evidence="2 4 7">
    <location>
        <position position="159"/>
    </location>
    <ligand>
        <name>Ca(2+)</name>
        <dbReference type="ChEBI" id="CHEBI:29108"/>
        <label>3</label>
    </ligand>
</feature>
<feature type="binding site" evidence="2 4 7">
    <location>
        <position position="161"/>
    </location>
    <ligand>
        <name>Ca(2+)</name>
        <dbReference type="ChEBI" id="CHEBI:29108"/>
        <label>3</label>
    </ligand>
</feature>
<feature type="binding site" evidence="2 4 7">
    <location>
        <position position="166"/>
    </location>
    <ligand>
        <name>Ca(2+)</name>
        <dbReference type="ChEBI" id="CHEBI:29108"/>
        <label>3</label>
    </ligand>
</feature>
<feature type="binding site" evidence="2 4 7">
    <location>
        <position position="199"/>
    </location>
    <ligand>
        <name>Ca(2+)</name>
        <dbReference type="ChEBI" id="CHEBI:29108"/>
        <label>4</label>
    </ligand>
</feature>
<feature type="binding site" evidence="2 4 7">
    <location>
        <position position="201"/>
    </location>
    <ligand>
        <name>Ca(2+)</name>
        <dbReference type="ChEBI" id="CHEBI:29108"/>
        <label>4</label>
    </ligand>
</feature>
<feature type="binding site" evidence="2 4 7">
    <location>
        <position position="203"/>
    </location>
    <ligand>
        <name>Ca(2+)</name>
        <dbReference type="ChEBI" id="CHEBI:29108"/>
        <label>4</label>
    </ligand>
</feature>
<feature type="binding site" evidence="2 4 7">
    <location>
        <position position="205"/>
    </location>
    <ligand>
        <name>Ca(2+)</name>
        <dbReference type="ChEBI" id="CHEBI:29108"/>
        <label>4</label>
    </ligand>
</feature>
<feature type="binding site" evidence="2 4 7">
    <location>
        <position position="210"/>
    </location>
    <ligand>
        <name>Ca(2+)</name>
        <dbReference type="ChEBI" id="CHEBI:29108"/>
        <label>4</label>
    </ligand>
</feature>
<feature type="modified residue" description="N-acetylalanine" evidence="1">
    <location>
        <position position="2"/>
    </location>
</feature>
<feature type="splice variant" id="VSP_055508" description="In isoform 2." evidence="5">
    <location>
        <begin position="1"/>
        <end position="57"/>
    </location>
</feature>
<feature type="helix" evidence="8">
    <location>
        <begin position="2"/>
        <end position="5"/>
    </location>
</feature>
<feature type="strand" evidence="8">
    <location>
        <begin position="9"/>
        <end position="11"/>
    </location>
</feature>
<feature type="helix" evidence="8">
    <location>
        <begin position="13"/>
        <end position="23"/>
    </location>
</feature>
<feature type="strand" evidence="8">
    <location>
        <begin position="29"/>
        <end position="31"/>
    </location>
</feature>
<feature type="helix" evidence="8">
    <location>
        <begin position="34"/>
        <end position="49"/>
    </location>
</feature>
<feature type="helix" evidence="8">
    <location>
        <begin position="56"/>
        <end position="62"/>
    </location>
</feature>
<feature type="helix" evidence="8">
    <location>
        <begin position="75"/>
        <end position="81"/>
    </location>
</feature>
<feature type="helix" evidence="8">
    <location>
        <begin position="86"/>
        <end position="90"/>
    </location>
</feature>
<feature type="helix" evidence="8">
    <location>
        <begin position="95"/>
        <end position="97"/>
    </location>
</feature>
<feature type="helix" evidence="8">
    <location>
        <begin position="100"/>
        <end position="110"/>
    </location>
</feature>
<feature type="strand" evidence="8">
    <location>
        <begin position="116"/>
        <end position="118"/>
    </location>
</feature>
<feature type="helix" evidence="8">
    <location>
        <begin position="120"/>
        <end position="133"/>
    </location>
</feature>
<feature type="helix" evidence="8">
    <location>
        <begin position="140"/>
        <end position="154"/>
    </location>
</feature>
<feature type="strand" evidence="8">
    <location>
        <begin position="159"/>
        <end position="162"/>
    </location>
</feature>
<feature type="helix" evidence="8">
    <location>
        <begin position="164"/>
        <end position="168"/>
    </location>
</feature>
<feature type="turn" evidence="8">
    <location>
        <begin position="173"/>
        <end position="175"/>
    </location>
</feature>
<feature type="helix" evidence="8">
    <location>
        <begin position="177"/>
        <end position="184"/>
    </location>
</feature>
<feature type="helix" evidence="8">
    <location>
        <begin position="188"/>
        <end position="198"/>
    </location>
</feature>
<feature type="strand" evidence="8">
    <location>
        <begin position="203"/>
        <end position="206"/>
    </location>
</feature>
<feature type="helix" evidence="8">
    <location>
        <begin position="208"/>
        <end position="221"/>
    </location>
</feature>
<feature type="turn" evidence="8">
    <location>
        <begin position="223"/>
        <end position="225"/>
    </location>
</feature>
<feature type="helix" evidence="8">
    <location>
        <begin position="228"/>
        <end position="230"/>
    </location>
</feature>
<feature type="helix" evidence="8">
    <location>
        <begin position="231"/>
        <end position="239"/>
    </location>
</feature>
<feature type="helix" evidence="8">
    <location>
        <begin position="249"/>
        <end position="256"/>
    </location>
</feature>
<reference key="1">
    <citation type="journal article" date="1987" name="Eur. J. Biochem.">
        <title>Human 27-kDa calbindin complementary DNA sequence. Evolutionary and functional implications.</title>
        <authorList>
            <person name="Parmentier M."/>
            <person name="Lawson D.E.M."/>
            <person name="Vassart G."/>
        </authorList>
    </citation>
    <scope>NUCLEOTIDE SEQUENCE [MRNA] (ISOFORM 1)</scope>
    <source>
        <tissue>Brain</tissue>
    </source>
</reference>
<reference key="2">
    <citation type="journal article" date="2004" name="Nat. Genet.">
        <title>Complete sequencing and characterization of 21,243 full-length human cDNAs.</title>
        <authorList>
            <person name="Ota T."/>
            <person name="Suzuki Y."/>
            <person name="Nishikawa T."/>
            <person name="Otsuki T."/>
            <person name="Sugiyama T."/>
            <person name="Irie R."/>
            <person name="Wakamatsu A."/>
            <person name="Hayashi K."/>
            <person name="Sato H."/>
            <person name="Nagai K."/>
            <person name="Kimura K."/>
            <person name="Makita H."/>
            <person name="Sekine M."/>
            <person name="Obayashi M."/>
            <person name="Nishi T."/>
            <person name="Shibahara T."/>
            <person name="Tanaka T."/>
            <person name="Ishii S."/>
            <person name="Yamamoto J."/>
            <person name="Saito K."/>
            <person name="Kawai Y."/>
            <person name="Isono Y."/>
            <person name="Nakamura Y."/>
            <person name="Nagahari K."/>
            <person name="Murakami K."/>
            <person name="Yasuda T."/>
            <person name="Iwayanagi T."/>
            <person name="Wagatsuma M."/>
            <person name="Shiratori A."/>
            <person name="Sudo H."/>
            <person name="Hosoiri T."/>
            <person name="Kaku Y."/>
            <person name="Kodaira H."/>
            <person name="Kondo H."/>
            <person name="Sugawara M."/>
            <person name="Takahashi M."/>
            <person name="Kanda K."/>
            <person name="Yokoi T."/>
            <person name="Furuya T."/>
            <person name="Kikkawa E."/>
            <person name="Omura Y."/>
            <person name="Abe K."/>
            <person name="Kamihara K."/>
            <person name="Katsuta N."/>
            <person name="Sato K."/>
            <person name="Tanikawa M."/>
            <person name="Yamazaki M."/>
            <person name="Ninomiya K."/>
            <person name="Ishibashi T."/>
            <person name="Yamashita H."/>
            <person name="Murakawa K."/>
            <person name="Fujimori K."/>
            <person name="Tanai H."/>
            <person name="Kimata M."/>
            <person name="Watanabe M."/>
            <person name="Hiraoka S."/>
            <person name="Chiba Y."/>
            <person name="Ishida S."/>
            <person name="Ono Y."/>
            <person name="Takiguchi S."/>
            <person name="Watanabe S."/>
            <person name="Yosida M."/>
            <person name="Hotuta T."/>
            <person name="Kusano J."/>
            <person name="Kanehori K."/>
            <person name="Takahashi-Fujii A."/>
            <person name="Hara H."/>
            <person name="Tanase T.-O."/>
            <person name="Nomura Y."/>
            <person name="Togiya S."/>
            <person name="Komai F."/>
            <person name="Hara R."/>
            <person name="Takeuchi K."/>
            <person name="Arita M."/>
            <person name="Imose N."/>
            <person name="Musashino K."/>
            <person name="Yuuki H."/>
            <person name="Oshima A."/>
            <person name="Sasaki N."/>
            <person name="Aotsuka S."/>
            <person name="Yoshikawa Y."/>
            <person name="Matsunawa H."/>
            <person name="Ichihara T."/>
            <person name="Shiohata N."/>
            <person name="Sano S."/>
            <person name="Moriya S."/>
            <person name="Momiyama H."/>
            <person name="Satoh N."/>
            <person name="Takami S."/>
            <person name="Terashima Y."/>
            <person name="Suzuki O."/>
            <person name="Nakagawa S."/>
            <person name="Senoh A."/>
            <person name="Mizoguchi H."/>
            <person name="Goto Y."/>
            <person name="Shimizu F."/>
            <person name="Wakebe H."/>
            <person name="Hishigaki H."/>
            <person name="Watanabe T."/>
            <person name="Sugiyama A."/>
            <person name="Takemoto M."/>
            <person name="Kawakami B."/>
            <person name="Yamazaki M."/>
            <person name="Watanabe K."/>
            <person name="Kumagai A."/>
            <person name="Itakura S."/>
            <person name="Fukuzumi Y."/>
            <person name="Fujimori Y."/>
            <person name="Komiyama M."/>
            <person name="Tashiro H."/>
            <person name="Tanigami A."/>
            <person name="Fujiwara T."/>
            <person name="Ono T."/>
            <person name="Yamada K."/>
            <person name="Fujii Y."/>
            <person name="Ozaki K."/>
            <person name="Hirao M."/>
            <person name="Ohmori Y."/>
            <person name="Kawabata A."/>
            <person name="Hikiji T."/>
            <person name="Kobatake N."/>
            <person name="Inagaki H."/>
            <person name="Ikema Y."/>
            <person name="Okamoto S."/>
            <person name="Okitani R."/>
            <person name="Kawakami T."/>
            <person name="Noguchi S."/>
            <person name="Itoh T."/>
            <person name="Shigeta K."/>
            <person name="Senba T."/>
            <person name="Matsumura K."/>
            <person name="Nakajima Y."/>
            <person name="Mizuno T."/>
            <person name="Morinaga M."/>
            <person name="Sasaki M."/>
            <person name="Togashi T."/>
            <person name="Oyama M."/>
            <person name="Hata H."/>
            <person name="Watanabe M."/>
            <person name="Komatsu T."/>
            <person name="Mizushima-Sugano J."/>
            <person name="Satoh T."/>
            <person name="Shirai Y."/>
            <person name="Takahashi Y."/>
            <person name="Nakagawa K."/>
            <person name="Okumura K."/>
            <person name="Nagase T."/>
            <person name="Nomura N."/>
            <person name="Kikuchi H."/>
            <person name="Masuho Y."/>
            <person name="Yamashita R."/>
            <person name="Nakai K."/>
            <person name="Yada T."/>
            <person name="Nakamura Y."/>
            <person name="Ohara O."/>
            <person name="Isogai T."/>
            <person name="Sugano S."/>
        </authorList>
    </citation>
    <scope>NUCLEOTIDE SEQUENCE [LARGE SCALE MRNA] (ISOFORMS 1 AND 2)</scope>
    <source>
        <tissue>Amygdala</tissue>
        <tissue>Cerebellum</tissue>
        <tissue>Substantia nigra</tissue>
    </source>
</reference>
<reference key="3">
    <citation type="journal article" date="2006" name="Nature">
        <title>DNA sequence and analysis of human chromosome 8.</title>
        <authorList>
            <person name="Nusbaum C."/>
            <person name="Mikkelsen T.S."/>
            <person name="Zody M.C."/>
            <person name="Asakawa S."/>
            <person name="Taudien S."/>
            <person name="Garber M."/>
            <person name="Kodira C.D."/>
            <person name="Schueler M.G."/>
            <person name="Shimizu A."/>
            <person name="Whittaker C.A."/>
            <person name="Chang J.L."/>
            <person name="Cuomo C.A."/>
            <person name="Dewar K."/>
            <person name="FitzGerald M.G."/>
            <person name="Yang X."/>
            <person name="Allen N.R."/>
            <person name="Anderson S."/>
            <person name="Asakawa T."/>
            <person name="Blechschmidt K."/>
            <person name="Bloom T."/>
            <person name="Borowsky M.L."/>
            <person name="Butler J."/>
            <person name="Cook A."/>
            <person name="Corum B."/>
            <person name="DeArellano K."/>
            <person name="DeCaprio D."/>
            <person name="Dooley K.T."/>
            <person name="Dorris L. III"/>
            <person name="Engels R."/>
            <person name="Gloeckner G."/>
            <person name="Hafez N."/>
            <person name="Hagopian D.S."/>
            <person name="Hall J.L."/>
            <person name="Ishikawa S.K."/>
            <person name="Jaffe D.B."/>
            <person name="Kamat A."/>
            <person name="Kudoh J."/>
            <person name="Lehmann R."/>
            <person name="Lokitsang T."/>
            <person name="Macdonald P."/>
            <person name="Major J.E."/>
            <person name="Matthews C.D."/>
            <person name="Mauceli E."/>
            <person name="Menzel U."/>
            <person name="Mihalev A.H."/>
            <person name="Minoshima S."/>
            <person name="Murayama Y."/>
            <person name="Naylor J.W."/>
            <person name="Nicol R."/>
            <person name="Nguyen C."/>
            <person name="O'Leary S.B."/>
            <person name="O'Neill K."/>
            <person name="Parker S.C.J."/>
            <person name="Polley A."/>
            <person name="Raymond C.K."/>
            <person name="Reichwald K."/>
            <person name="Rodriguez J."/>
            <person name="Sasaki T."/>
            <person name="Schilhabel M."/>
            <person name="Siddiqui R."/>
            <person name="Smith C.L."/>
            <person name="Sneddon T.P."/>
            <person name="Talamas J.A."/>
            <person name="Tenzin P."/>
            <person name="Topham K."/>
            <person name="Venkataraman V."/>
            <person name="Wen G."/>
            <person name="Yamazaki S."/>
            <person name="Young S.K."/>
            <person name="Zeng Q."/>
            <person name="Zimmer A.R."/>
            <person name="Rosenthal A."/>
            <person name="Birren B.W."/>
            <person name="Platzer M."/>
            <person name="Shimizu N."/>
            <person name="Lander E.S."/>
        </authorList>
    </citation>
    <scope>NUCLEOTIDE SEQUENCE [LARGE SCALE GENOMIC DNA]</scope>
</reference>
<reference key="4">
    <citation type="submission" date="2005-07" db="EMBL/GenBank/DDBJ databases">
        <authorList>
            <person name="Mural R.J."/>
            <person name="Istrail S."/>
            <person name="Sutton G."/>
            <person name="Florea L."/>
            <person name="Halpern A.L."/>
            <person name="Mobarry C.M."/>
            <person name="Lippert R."/>
            <person name="Walenz B."/>
            <person name="Shatkay H."/>
            <person name="Dew I."/>
            <person name="Miller J.R."/>
            <person name="Flanigan M.J."/>
            <person name="Edwards N.J."/>
            <person name="Bolanos R."/>
            <person name="Fasulo D."/>
            <person name="Halldorsson B.V."/>
            <person name="Hannenhalli S."/>
            <person name="Turner R."/>
            <person name="Yooseph S."/>
            <person name="Lu F."/>
            <person name="Nusskern D.R."/>
            <person name="Shue B.C."/>
            <person name="Zheng X.H."/>
            <person name="Zhong F."/>
            <person name="Delcher A.L."/>
            <person name="Huson D.H."/>
            <person name="Kravitz S.A."/>
            <person name="Mouchard L."/>
            <person name="Reinert K."/>
            <person name="Remington K.A."/>
            <person name="Clark A.G."/>
            <person name="Waterman M.S."/>
            <person name="Eichler E.E."/>
            <person name="Adams M.D."/>
            <person name="Hunkapiller M.W."/>
            <person name="Myers E.W."/>
            <person name="Venter J.C."/>
        </authorList>
    </citation>
    <scope>NUCLEOTIDE SEQUENCE [LARGE SCALE GENOMIC DNA]</scope>
</reference>
<reference key="5">
    <citation type="journal article" date="2004" name="Genome Res.">
        <title>The status, quality, and expansion of the NIH full-length cDNA project: the Mammalian Gene Collection (MGC).</title>
        <authorList>
            <consortium name="The MGC Project Team"/>
        </authorList>
    </citation>
    <scope>NUCLEOTIDE SEQUENCE [LARGE SCALE MRNA] (ISOFORM 1)</scope>
    <source>
        <tissue>Kidney</tissue>
        <tissue>Lung</tissue>
    </source>
</reference>
<reference key="6">
    <citation type="journal article" date="1989" name="Genomics">
        <title>The human calbindin 27-kDa gene: structural organization of the 5' and 3' regions, chromosomal assignment, and restriction fragment length polymorphism.</title>
        <authorList>
            <person name="Parmentier M."/>
            <person name="de Vijlder J.J.M."/>
            <person name="Muir E."/>
            <person name="Szpirer C."/>
            <person name="Islam M.Q."/>
            <person name="Geurts van Kessel A."/>
            <person name="Lawson D.E.M."/>
            <person name="Vassart G."/>
        </authorList>
    </citation>
    <scope>NUCLEOTIDE SEQUENCE [GENOMIC DNA] OF 1-42 AND 201-261</scope>
    <source>
        <tissue>Brain</tissue>
    </source>
</reference>
<reference key="7">
    <citation type="journal article" date="2003" name="Biochem. Biophys. Res. Commun.">
        <title>Calbindin D28K interacts with Ran-binding protein M: identification of interacting domains by NMR spectroscopy.</title>
        <authorList>
            <person name="Lutz W."/>
            <person name="Frank E.M."/>
            <person name="Craig T.A."/>
            <person name="Thompson R."/>
            <person name="Venters R.A."/>
            <person name="Kojetin D."/>
            <person name="Cavanagh J."/>
            <person name="Kumar R."/>
        </authorList>
    </citation>
    <scope>INTERACTION WITH RANBP9</scope>
</reference>
<reference key="8">
    <citation type="journal article" date="2011" name="BMC Syst. Biol.">
        <title>Initial characterization of the human central proteome.</title>
        <authorList>
            <person name="Burkard T.R."/>
            <person name="Planyavsky M."/>
            <person name="Kaupe I."/>
            <person name="Breitwieser F.P."/>
            <person name="Buerckstuemmer T."/>
            <person name="Bennett K.L."/>
            <person name="Superti-Furga G."/>
            <person name="Colinge J."/>
        </authorList>
    </citation>
    <scope>IDENTIFICATION BY MASS SPECTROMETRY [LARGE SCALE ANALYSIS]</scope>
</reference>
<reference evidence="7" key="9">
    <citation type="journal article" date="2018" name="Acta Crystallogr. D">
        <title>The X-ray structure of human calbindin-D28K: an improved model.</title>
        <authorList>
            <person name="Noble J.W."/>
            <person name="Almalki R."/>
            <person name="Roe S.M."/>
            <person name="Wagner A."/>
            <person name="Duman R."/>
            <person name="Atack J.R."/>
        </authorList>
    </citation>
    <scope>X-RAY CRYSTALLOGRAPHY (1.51 ANGSTROMS) IN COMPLEX WITH CALCIUM IONS</scope>
    <scope>DOMAIN</scope>
</reference>
<name>CALB1_HUMAN</name>
<dbReference type="EMBL" id="X06661">
    <property type="protein sequence ID" value="CAA29860.1"/>
    <property type="molecule type" value="mRNA"/>
</dbReference>
<dbReference type="EMBL" id="AF068862">
    <property type="protein sequence ID" value="AAC62230.1"/>
    <property type="molecule type" value="Genomic_DNA"/>
</dbReference>
<dbReference type="EMBL" id="AC004612">
    <property type="protein sequence ID" value="AAC14672.1"/>
    <property type="molecule type" value="Genomic_DNA"/>
</dbReference>
<dbReference type="EMBL" id="AK054881">
    <property type="protein sequence ID" value="BAG51438.1"/>
    <property type="molecule type" value="mRNA"/>
</dbReference>
<dbReference type="EMBL" id="AK312491">
    <property type="protein sequence ID" value="BAG35393.1"/>
    <property type="molecule type" value="mRNA"/>
</dbReference>
<dbReference type="EMBL" id="AK315959">
    <property type="protein sequence ID" value="BAH14330.1"/>
    <property type="molecule type" value="mRNA"/>
</dbReference>
<dbReference type="EMBL" id="AF049895">
    <property type="status" value="NOT_ANNOTATED_CDS"/>
    <property type="molecule type" value="Genomic_DNA"/>
</dbReference>
<dbReference type="EMBL" id="AC123779">
    <property type="status" value="NOT_ANNOTATED_CDS"/>
    <property type="molecule type" value="Genomic_DNA"/>
</dbReference>
<dbReference type="EMBL" id="CH471060">
    <property type="protein sequence ID" value="EAW91665.1"/>
    <property type="molecule type" value="Genomic_DNA"/>
</dbReference>
<dbReference type="EMBL" id="CH471060">
    <property type="protein sequence ID" value="EAW91666.1"/>
    <property type="molecule type" value="Genomic_DNA"/>
</dbReference>
<dbReference type="EMBL" id="BC006478">
    <property type="protein sequence ID" value="AAH06478.1"/>
    <property type="molecule type" value="mRNA"/>
</dbReference>
<dbReference type="EMBL" id="BC020864">
    <property type="protein sequence ID" value="AAH20864.1"/>
    <property type="molecule type" value="mRNA"/>
</dbReference>
<dbReference type="EMBL" id="M19878">
    <property type="protein sequence ID" value="AAA98991.1"/>
    <property type="molecule type" value="Genomic_DNA"/>
</dbReference>
<dbReference type="EMBL" id="M19879">
    <property type="protein sequence ID" value="AAA98992.1"/>
    <property type="molecule type" value="Genomic_DNA"/>
</dbReference>
<dbReference type="CCDS" id="CCDS6251.1">
    <molecule id="P05937-1"/>
</dbReference>
<dbReference type="PIR" id="S00234">
    <property type="entry name" value="S00234"/>
</dbReference>
<dbReference type="RefSeq" id="NP_004920.1">
    <molecule id="P05937-1"/>
    <property type="nucleotide sequence ID" value="NM_004929.4"/>
</dbReference>
<dbReference type="PDB" id="6FIE">
    <property type="method" value="X-ray"/>
    <property type="resolution" value="1.51 A"/>
    <property type="chains" value="B=1-261"/>
</dbReference>
<dbReference type="PDBsum" id="6FIE"/>
<dbReference type="SASBDB" id="P05937"/>
<dbReference type="SMR" id="P05937"/>
<dbReference type="BioGRID" id="107244">
    <property type="interactions" value="8"/>
</dbReference>
<dbReference type="FunCoup" id="P05937">
    <property type="interactions" value="454"/>
</dbReference>
<dbReference type="IntAct" id="P05937">
    <property type="interactions" value="8"/>
</dbReference>
<dbReference type="MINT" id="P05937"/>
<dbReference type="STRING" id="9606.ENSP00000265431"/>
<dbReference type="DrugBank" id="DB11093">
    <property type="generic name" value="Calcium citrate"/>
</dbReference>
<dbReference type="DrugBank" id="DB11348">
    <property type="generic name" value="Calcium Phosphate"/>
</dbReference>
<dbReference type="DrugBank" id="DB14481">
    <property type="generic name" value="Calcium phosphate dihydrate"/>
</dbReference>
<dbReference type="GlyConnect" id="1056">
    <property type="glycosylation" value="3 N-Linked glycans (1 site)"/>
</dbReference>
<dbReference type="GlyCosmos" id="P05937">
    <property type="glycosylation" value="1 site, 3 glycans"/>
</dbReference>
<dbReference type="GlyGen" id="P05937">
    <property type="glycosylation" value="1 site, 3 N-linked glycans (1 site)"/>
</dbReference>
<dbReference type="iPTMnet" id="P05937"/>
<dbReference type="PhosphoSitePlus" id="P05937"/>
<dbReference type="BioMuta" id="CALB1"/>
<dbReference type="jPOST" id="P05937"/>
<dbReference type="MassIVE" id="P05937"/>
<dbReference type="PaxDb" id="9606-ENSP00000265431"/>
<dbReference type="PeptideAtlas" id="P05937"/>
<dbReference type="ProteomicsDB" id="51862">
    <molecule id="P05937-1"/>
</dbReference>
<dbReference type="ProteomicsDB" id="7034"/>
<dbReference type="Pumba" id="P05937"/>
<dbReference type="ABCD" id="P05937">
    <property type="antibodies" value="2 sequenced antibodies"/>
</dbReference>
<dbReference type="Antibodypedia" id="3678">
    <property type="antibodies" value="508 antibodies from 44 providers"/>
</dbReference>
<dbReference type="DNASU" id="793"/>
<dbReference type="Ensembl" id="ENST00000265431.7">
    <molecule id="P05937-1"/>
    <property type="protein sequence ID" value="ENSP00000265431.3"/>
    <property type="gene ID" value="ENSG00000104327.7"/>
</dbReference>
<dbReference type="Ensembl" id="ENST00000518457.5">
    <molecule id="P05937-2"/>
    <property type="protein sequence ID" value="ENSP00000429602.1"/>
    <property type="gene ID" value="ENSG00000104327.7"/>
</dbReference>
<dbReference type="GeneID" id="793"/>
<dbReference type="KEGG" id="hsa:793"/>
<dbReference type="MANE-Select" id="ENST00000265431.7">
    <property type="protein sequence ID" value="ENSP00000265431.3"/>
    <property type="RefSeq nucleotide sequence ID" value="NM_004929.4"/>
    <property type="RefSeq protein sequence ID" value="NP_004920.1"/>
</dbReference>
<dbReference type="UCSC" id="uc003yel.2">
    <molecule id="P05937-1"/>
    <property type="organism name" value="human"/>
</dbReference>
<dbReference type="AGR" id="HGNC:1434"/>
<dbReference type="CTD" id="793"/>
<dbReference type="DisGeNET" id="793"/>
<dbReference type="GeneCards" id="CALB1"/>
<dbReference type="HGNC" id="HGNC:1434">
    <property type="gene designation" value="CALB1"/>
</dbReference>
<dbReference type="HPA" id="ENSG00000104327">
    <property type="expression patterns" value="Tissue enhanced (brain, kidney)"/>
</dbReference>
<dbReference type="MIM" id="114050">
    <property type="type" value="gene"/>
</dbReference>
<dbReference type="neXtProt" id="NX_P05937"/>
<dbReference type="OpenTargets" id="ENSG00000104327"/>
<dbReference type="PharmGKB" id="PA26026"/>
<dbReference type="VEuPathDB" id="HostDB:ENSG00000104327"/>
<dbReference type="eggNOG" id="KOG0027">
    <property type="taxonomic scope" value="Eukaryota"/>
</dbReference>
<dbReference type="GeneTree" id="ENSGT00950000183108"/>
<dbReference type="HOGENOM" id="CLU_054826_1_1_1"/>
<dbReference type="InParanoid" id="P05937"/>
<dbReference type="OMA" id="WLHFDSD"/>
<dbReference type="OrthoDB" id="428774at2759"/>
<dbReference type="PAN-GO" id="P05937">
    <property type="GO annotations" value="9 GO annotations based on evolutionary models"/>
</dbReference>
<dbReference type="PhylomeDB" id="P05937"/>
<dbReference type="TreeFam" id="TF325083"/>
<dbReference type="BRENDA" id="3.1.3.25">
    <property type="organism ID" value="2681"/>
</dbReference>
<dbReference type="PathwayCommons" id="P05937"/>
<dbReference type="Reactome" id="R-HSA-977225">
    <property type="pathway name" value="Amyloid fiber formation"/>
</dbReference>
<dbReference type="SignaLink" id="P05937"/>
<dbReference type="BioGRID-ORCS" id="793">
    <property type="hits" value="9 hits in 1160 CRISPR screens"/>
</dbReference>
<dbReference type="ChiTaRS" id="CALB1">
    <property type="organism name" value="human"/>
</dbReference>
<dbReference type="GenomeRNAi" id="793"/>
<dbReference type="Pharos" id="P05937">
    <property type="development level" value="Tbio"/>
</dbReference>
<dbReference type="PRO" id="PR:P05937"/>
<dbReference type="Proteomes" id="UP000005640">
    <property type="component" value="Chromosome 8"/>
</dbReference>
<dbReference type="RNAct" id="P05937">
    <property type="molecule type" value="protein"/>
</dbReference>
<dbReference type="Bgee" id="ENSG00000104327">
    <property type="expression patterns" value="Expressed in nephron tubule and 135 other cell types or tissues"/>
</dbReference>
<dbReference type="ExpressionAtlas" id="P05937">
    <property type="expression patterns" value="baseline and differential"/>
</dbReference>
<dbReference type="GO" id="GO:0030424">
    <property type="term" value="C:axon"/>
    <property type="evidence" value="ECO:0000314"/>
    <property type="project" value="UniProtKB"/>
</dbReference>
<dbReference type="GO" id="GO:0044305">
    <property type="term" value="C:calyx of Held"/>
    <property type="evidence" value="ECO:0007669"/>
    <property type="project" value="Ensembl"/>
</dbReference>
<dbReference type="GO" id="GO:0032437">
    <property type="term" value="C:cuticular plate"/>
    <property type="evidence" value="ECO:0007669"/>
    <property type="project" value="Ensembl"/>
</dbReference>
<dbReference type="GO" id="GO:0005829">
    <property type="term" value="C:cytosol"/>
    <property type="evidence" value="ECO:0000318"/>
    <property type="project" value="GO_Central"/>
</dbReference>
<dbReference type="GO" id="GO:0030425">
    <property type="term" value="C:dendrite"/>
    <property type="evidence" value="ECO:0000314"/>
    <property type="project" value="UniProtKB"/>
</dbReference>
<dbReference type="GO" id="GO:0070062">
    <property type="term" value="C:extracellular exosome"/>
    <property type="evidence" value="ECO:0007005"/>
    <property type="project" value="UniProtKB"/>
</dbReference>
<dbReference type="GO" id="GO:0098982">
    <property type="term" value="C:GABA-ergic synapse"/>
    <property type="evidence" value="ECO:0007669"/>
    <property type="project" value="Ensembl"/>
</dbReference>
<dbReference type="GO" id="GO:0098978">
    <property type="term" value="C:glutamatergic synapse"/>
    <property type="evidence" value="ECO:0007669"/>
    <property type="project" value="Ensembl"/>
</dbReference>
<dbReference type="GO" id="GO:0098686">
    <property type="term" value="C:hippocampal mossy fiber to CA3 synapse"/>
    <property type="evidence" value="ECO:0007669"/>
    <property type="project" value="Ensembl"/>
</dbReference>
<dbReference type="GO" id="GO:0043025">
    <property type="term" value="C:neuronal cell body"/>
    <property type="evidence" value="ECO:0000314"/>
    <property type="project" value="UniProtKB"/>
</dbReference>
<dbReference type="GO" id="GO:0005634">
    <property type="term" value="C:nucleus"/>
    <property type="evidence" value="ECO:0000314"/>
    <property type="project" value="UniProtKB"/>
</dbReference>
<dbReference type="GO" id="GO:0099524">
    <property type="term" value="C:postsynaptic cytosol"/>
    <property type="evidence" value="ECO:0007669"/>
    <property type="project" value="Ensembl"/>
</dbReference>
<dbReference type="GO" id="GO:0099523">
    <property type="term" value="C:presynaptic cytosol"/>
    <property type="evidence" value="ECO:0007669"/>
    <property type="project" value="Ensembl"/>
</dbReference>
<dbReference type="GO" id="GO:0032420">
    <property type="term" value="C:stereocilium"/>
    <property type="evidence" value="ECO:0007669"/>
    <property type="project" value="Ensembl"/>
</dbReference>
<dbReference type="GO" id="GO:0045202">
    <property type="term" value="C:synapse"/>
    <property type="evidence" value="ECO:0000318"/>
    <property type="project" value="GO_Central"/>
</dbReference>
<dbReference type="GO" id="GO:0043195">
    <property type="term" value="C:terminal bouton"/>
    <property type="evidence" value="ECO:0000318"/>
    <property type="project" value="GO_Central"/>
</dbReference>
<dbReference type="GO" id="GO:0005509">
    <property type="term" value="F:calcium ion binding"/>
    <property type="evidence" value="ECO:0000314"/>
    <property type="project" value="UniProtKB"/>
</dbReference>
<dbReference type="GO" id="GO:0099567">
    <property type="term" value="F:calcium ion binding involved in regulation of postsynaptic cytosolic calcium ion concentration"/>
    <property type="evidence" value="ECO:0007669"/>
    <property type="project" value="Ensembl"/>
</dbReference>
<dbReference type="GO" id="GO:0099534">
    <property type="term" value="F:calcium ion binding involved in regulation of presynaptic cytosolic calcium ion concentration"/>
    <property type="evidence" value="ECO:0007669"/>
    <property type="project" value="Ensembl"/>
</dbReference>
<dbReference type="GO" id="GO:0005499">
    <property type="term" value="F:vitamin D binding"/>
    <property type="evidence" value="ECO:0007669"/>
    <property type="project" value="UniProtKB-KW"/>
</dbReference>
<dbReference type="GO" id="GO:0008270">
    <property type="term" value="F:zinc ion binding"/>
    <property type="evidence" value="ECO:0000315"/>
    <property type="project" value="UniProtKB"/>
</dbReference>
<dbReference type="GO" id="GO:0090102">
    <property type="term" value="P:cochlea development"/>
    <property type="evidence" value="ECO:0007669"/>
    <property type="project" value="Ensembl"/>
</dbReference>
<dbReference type="GO" id="GO:0007626">
    <property type="term" value="P:locomotory behavior"/>
    <property type="evidence" value="ECO:0007669"/>
    <property type="project" value="Ensembl"/>
</dbReference>
<dbReference type="GO" id="GO:0007616">
    <property type="term" value="P:long-term memory"/>
    <property type="evidence" value="ECO:0000315"/>
    <property type="project" value="UniProtKB"/>
</dbReference>
<dbReference type="GO" id="GO:0072205">
    <property type="term" value="P:metanephric collecting duct development"/>
    <property type="evidence" value="ECO:0007669"/>
    <property type="project" value="Ensembl"/>
</dbReference>
<dbReference type="GO" id="GO:0072286">
    <property type="term" value="P:metanephric connecting tubule development"/>
    <property type="evidence" value="ECO:0007669"/>
    <property type="project" value="Ensembl"/>
</dbReference>
<dbReference type="GO" id="GO:0072221">
    <property type="term" value="P:metanephric distal convoluted tubule development"/>
    <property type="evidence" value="ECO:0007669"/>
    <property type="project" value="Ensembl"/>
</dbReference>
<dbReference type="GO" id="GO:0035502">
    <property type="term" value="P:metanephric part of ureteric bud development"/>
    <property type="evidence" value="ECO:0007669"/>
    <property type="project" value="Ensembl"/>
</dbReference>
<dbReference type="GO" id="GO:0048167">
    <property type="term" value="P:regulation of synaptic plasticity"/>
    <property type="evidence" value="ECO:0007669"/>
    <property type="project" value="Ensembl"/>
</dbReference>
<dbReference type="GO" id="GO:0010996">
    <property type="term" value="P:response to auditory stimulus"/>
    <property type="evidence" value="ECO:0007669"/>
    <property type="project" value="Ensembl"/>
</dbReference>
<dbReference type="GO" id="GO:0010842">
    <property type="term" value="P:retina layer formation"/>
    <property type="evidence" value="ECO:0007669"/>
    <property type="project" value="Ensembl"/>
</dbReference>
<dbReference type="GO" id="GO:0007614">
    <property type="term" value="P:short-term memory"/>
    <property type="evidence" value="ECO:0000315"/>
    <property type="project" value="UniProtKB"/>
</dbReference>
<dbReference type="CDD" id="cd16176">
    <property type="entry name" value="EFh_HEF_CB"/>
    <property type="match status" value="1"/>
</dbReference>
<dbReference type="FunFam" id="1.10.238.10:FF:000108">
    <property type="entry name" value="Calbindin 1"/>
    <property type="match status" value="1"/>
</dbReference>
<dbReference type="FunFam" id="1.10.238.10:FF:000147">
    <property type="entry name" value="Calbindin 1"/>
    <property type="match status" value="1"/>
</dbReference>
<dbReference type="FunFam" id="1.10.238.10:FF:000054">
    <property type="entry name" value="Calbindin 2"/>
    <property type="match status" value="1"/>
</dbReference>
<dbReference type="Gene3D" id="1.10.238.10">
    <property type="entry name" value="EF-hand"/>
    <property type="match status" value="3"/>
</dbReference>
<dbReference type="InterPro" id="IPR051001">
    <property type="entry name" value="Calbindin_Ca-bind"/>
</dbReference>
<dbReference type="InterPro" id="IPR029634">
    <property type="entry name" value="Calbindin_six-EFh_dom"/>
</dbReference>
<dbReference type="InterPro" id="IPR011992">
    <property type="entry name" value="EF-hand-dom_pair"/>
</dbReference>
<dbReference type="InterPro" id="IPR018247">
    <property type="entry name" value="EF_Hand_1_Ca_BS"/>
</dbReference>
<dbReference type="InterPro" id="IPR002048">
    <property type="entry name" value="EF_hand_dom"/>
</dbReference>
<dbReference type="PANTHER" id="PTHR19972">
    <property type="entry name" value="CALBINDIN"/>
    <property type="match status" value="1"/>
</dbReference>
<dbReference type="PANTHER" id="PTHR19972:SF14">
    <property type="entry name" value="CALBINDIN"/>
    <property type="match status" value="1"/>
</dbReference>
<dbReference type="Pfam" id="PF00036">
    <property type="entry name" value="EF-hand_1"/>
    <property type="match status" value="1"/>
</dbReference>
<dbReference type="Pfam" id="PF13499">
    <property type="entry name" value="EF-hand_7"/>
    <property type="match status" value="1"/>
</dbReference>
<dbReference type="SMART" id="SM00054">
    <property type="entry name" value="EFh"/>
    <property type="match status" value="4"/>
</dbReference>
<dbReference type="SUPFAM" id="SSF47473">
    <property type="entry name" value="EF-hand"/>
    <property type="match status" value="2"/>
</dbReference>
<dbReference type="PROSITE" id="PS00018">
    <property type="entry name" value="EF_HAND_1"/>
    <property type="match status" value="4"/>
</dbReference>
<dbReference type="PROSITE" id="PS50222">
    <property type="entry name" value="EF_HAND_2"/>
    <property type="match status" value="5"/>
</dbReference>
<organism>
    <name type="scientific">Homo sapiens</name>
    <name type="common">Human</name>
    <dbReference type="NCBI Taxonomy" id="9606"/>
    <lineage>
        <taxon>Eukaryota</taxon>
        <taxon>Metazoa</taxon>
        <taxon>Chordata</taxon>
        <taxon>Craniata</taxon>
        <taxon>Vertebrata</taxon>
        <taxon>Euteleostomi</taxon>
        <taxon>Mammalia</taxon>
        <taxon>Eutheria</taxon>
        <taxon>Euarchontoglires</taxon>
        <taxon>Primates</taxon>
        <taxon>Haplorrhini</taxon>
        <taxon>Catarrhini</taxon>
        <taxon>Hominidae</taxon>
        <taxon>Homo</taxon>
    </lineage>
</organism>
<protein>
    <recommendedName>
        <fullName>Calbindin</fullName>
    </recommendedName>
    <alternativeName>
        <fullName>Calbindin D28</fullName>
    </alternativeName>
    <alternativeName>
        <fullName>D-28K</fullName>
    </alternativeName>
    <alternativeName>
        <fullName>Vitamin D-dependent calcium-binding protein, avian-type</fullName>
    </alternativeName>
</protein>
<accession>P05937</accession>
<accession>B2R696</accession>
<accession>B7Z9J4</accession>
<gene>
    <name type="primary">CALB1</name>
    <name type="synonym">CAB27</name>
</gene>
<comment type="function">
    <text>Buffers cytosolic calcium. May stimulate a membrane Ca(2+)-ATPase and a 3',5'-cyclic nucleotide phosphodiesterase.</text>
</comment>
<comment type="subunit">
    <text evidence="3">Interacts with RANBP9.</text>
</comment>
<comment type="interaction">
    <interactant intactId="EBI-4286943">
        <id>P05937</id>
    </interactant>
    <interactant intactId="EBI-18924329">
        <id>Q96IK1-2</id>
        <label>BOD1</label>
    </interactant>
    <organismsDiffer>false</organismsDiffer>
    <experiments>3</experiments>
</comment>
<comment type="interaction">
    <interactant intactId="EBI-4286943">
        <id>P05937</id>
    </interactant>
    <interactant intactId="EBI-81279">
        <id>Q9Y6K9</id>
        <label>IKBKG</label>
    </interactant>
    <organismsDiffer>false</organismsDiffer>
    <experiments>3</experiments>
</comment>
<comment type="interaction">
    <interactant intactId="EBI-4286943">
        <id>P05937</id>
    </interactant>
    <interactant intactId="EBI-751281">
        <id>Q9NQA5</id>
        <label>TRPV5</label>
    </interactant>
    <organismsDiffer>false</organismsDiffer>
    <experiments>4</experiments>
</comment>
<comment type="alternative products">
    <event type="alternative splicing"/>
    <isoform>
        <id>P05937-1</id>
        <name>1</name>
        <sequence type="displayed"/>
    </isoform>
    <isoform>
        <id>P05937-2</id>
        <name>2</name>
        <sequence type="described" ref="VSP_055508"/>
    </isoform>
</comment>
<comment type="domain">
    <text evidence="4">This protein has four functional calcium-binding sites; potential sites II and VI have lost affinity for calcium.</text>
</comment>
<comment type="similarity">
    <text evidence="6">Belongs to the calbindin family.</text>
</comment>
<comment type="online information" name="Wikipedia">
    <link uri="https://en.wikipedia.org/wiki/Calbindin"/>
    <text>Calbindin entry</text>
</comment>
<evidence type="ECO:0000250" key="1">
    <source>
        <dbReference type="UniProtKB" id="P04467"/>
    </source>
</evidence>
<evidence type="ECO:0000255" key="2">
    <source>
        <dbReference type="PROSITE-ProRule" id="PRU00448"/>
    </source>
</evidence>
<evidence type="ECO:0000269" key="3">
    <source>
    </source>
</evidence>
<evidence type="ECO:0000269" key="4">
    <source>
    </source>
</evidence>
<evidence type="ECO:0000303" key="5">
    <source>
    </source>
</evidence>
<evidence type="ECO:0000305" key="6"/>
<evidence type="ECO:0007744" key="7">
    <source>
        <dbReference type="PDB" id="6FIE"/>
    </source>
</evidence>
<evidence type="ECO:0007829" key="8">
    <source>
        <dbReference type="PDB" id="6FIE"/>
    </source>
</evidence>